<proteinExistence type="evidence at protein level"/>
<reference evidence="5" key="1">
    <citation type="journal article" date="2011" name="Toxicon">
        <title>Peptidomic dissection of the skin secretion of Phasmahyla jandaia (Bokermann and Sazima, 1978) (Anura, Hylidae, Phyllomedusinae).</title>
        <authorList>
            <person name="Rates B."/>
            <person name="Silva L.P."/>
            <person name="Ireno I.C."/>
            <person name="Leite F.S."/>
            <person name="Borges M.H."/>
            <person name="Bloch C. Jr."/>
            <person name="De Lima M.E."/>
            <person name="Pimenta A.M."/>
        </authorList>
    </citation>
    <scope>PROTEIN SEQUENCE</scope>
    <scope>SUBCELLULAR LOCATION</scope>
    <scope>TISSUE SPECIFICITY</scope>
    <scope>MASS SPECTROMETRY</scope>
    <scope>AMIDATION AT VAL-29</scope>
    <source>
        <tissue evidence="3">Skin secretion</tissue>
    </source>
</reference>
<sequence length="29" mass="2767">GLWSKIKEAGKAAVKAAGKAALGAVANSV</sequence>
<accession>P86683</accession>
<feature type="peptide" id="PRO_0000404614" description="Dermaseptin-J5" evidence="3">
    <location>
        <begin position="1"/>
        <end position="29"/>
    </location>
</feature>
<feature type="modified residue" description="Valine amide" evidence="3">
    <location>
        <position position="29"/>
    </location>
</feature>
<feature type="unsure residue" description="L or I" evidence="3">
    <location>
        <position position="2"/>
    </location>
</feature>
<feature type="unsure residue" description="K or Q" evidence="3">
    <location>
        <position position="5"/>
    </location>
</feature>
<feature type="unsure residue" description="I or L" evidence="3">
    <location>
        <position position="6"/>
    </location>
</feature>
<feature type="unsure residue" description="K or Q" evidence="3">
    <location>
        <position position="7"/>
    </location>
</feature>
<feature type="unsure residue" description="K or Q" evidence="3">
    <location>
        <position position="11"/>
    </location>
</feature>
<feature type="unsure residue" description="K or Q" evidence="3">
    <location>
        <position position="15"/>
    </location>
</feature>
<feature type="unsure residue" description="K or Q" evidence="3">
    <location>
        <position position="19"/>
    </location>
</feature>
<feature type="unsure residue" description="L or I" evidence="3">
    <location>
        <position position="22"/>
    </location>
</feature>
<evidence type="ECO:0000250" key="1">
    <source>
        <dbReference type="UniProtKB" id="P84921"/>
    </source>
</evidence>
<evidence type="ECO:0000255" key="2"/>
<evidence type="ECO:0000269" key="3">
    <source>
    </source>
</evidence>
<evidence type="ECO:0000303" key="4">
    <source>
    </source>
</evidence>
<evidence type="ECO:0000305" key="5"/>
<keyword id="KW-0027">Amidation</keyword>
<keyword id="KW-0878">Amphibian defense peptide</keyword>
<keyword id="KW-0044">Antibiotic</keyword>
<keyword id="KW-0929">Antimicrobial</keyword>
<keyword id="KW-0903">Direct protein sequencing</keyword>
<keyword id="KW-0964">Secreted</keyword>
<organism>
    <name type="scientific">Phasmahyla jandaia</name>
    <name type="common">Jandaia leaf frog</name>
    <name type="synonym">Phyllomedusa jandaia</name>
    <dbReference type="NCBI Taxonomy" id="762504"/>
    <lineage>
        <taxon>Eukaryota</taxon>
        <taxon>Metazoa</taxon>
        <taxon>Chordata</taxon>
        <taxon>Craniata</taxon>
        <taxon>Vertebrata</taxon>
        <taxon>Euteleostomi</taxon>
        <taxon>Amphibia</taxon>
        <taxon>Batrachia</taxon>
        <taxon>Anura</taxon>
        <taxon>Neobatrachia</taxon>
        <taxon>Hyloidea</taxon>
        <taxon>Hylidae</taxon>
        <taxon>Phyllomedusinae</taxon>
        <taxon>Phasmahyla</taxon>
    </lineage>
</organism>
<protein>
    <recommendedName>
        <fullName evidence="4">Dermaseptin-J5</fullName>
        <shortName evidence="4">DRS-J5</shortName>
    </recommendedName>
</protein>
<comment type="function">
    <text evidence="1">Has antimicrobial activity.</text>
</comment>
<comment type="subcellular location">
    <subcellularLocation>
        <location evidence="3">Secreted</location>
    </subcellularLocation>
</comment>
<comment type="tissue specificity">
    <text evidence="3">Expressed by the skin glands.</text>
</comment>
<comment type="mass spectrometry" mass="2764.4" method="MALDI" evidence="3"/>
<comment type="similarity">
    <text evidence="2">Belongs to the frog skin active peptide (FSAP) family. Dermaseptin subfamily.</text>
</comment>
<dbReference type="SMR" id="P86683"/>
<dbReference type="GO" id="GO:0005576">
    <property type="term" value="C:extracellular region"/>
    <property type="evidence" value="ECO:0007669"/>
    <property type="project" value="UniProtKB-SubCell"/>
</dbReference>
<dbReference type="GO" id="GO:0042742">
    <property type="term" value="P:defense response to bacterium"/>
    <property type="evidence" value="ECO:0007669"/>
    <property type="project" value="UniProtKB-KW"/>
</dbReference>
<dbReference type="InterPro" id="IPR022731">
    <property type="entry name" value="Dermaseptin_dom"/>
</dbReference>
<dbReference type="Pfam" id="PF12121">
    <property type="entry name" value="DD_K"/>
    <property type="match status" value="1"/>
</dbReference>
<name>DMS5_PHAJA</name>